<dbReference type="EMBL" id="AY032729">
    <property type="protein sequence ID" value="AAK96009.1"/>
    <property type="molecule type" value="mRNA"/>
</dbReference>
<dbReference type="EMBL" id="AF010302">
    <property type="protein sequence ID" value="AAB63248.1"/>
    <property type="molecule type" value="mRNA"/>
</dbReference>
<dbReference type="RefSeq" id="NP_446105.1">
    <property type="nucleotide sequence ID" value="NM_053653.2"/>
</dbReference>
<dbReference type="SMR" id="O35757"/>
<dbReference type="FunCoup" id="O35757">
    <property type="interactions" value="924"/>
</dbReference>
<dbReference type="STRING" id="10116.ENSRNOP00000015529"/>
<dbReference type="GlyCosmos" id="O35757">
    <property type="glycosylation" value="3 sites, No reported glycans"/>
</dbReference>
<dbReference type="GlyGen" id="O35757">
    <property type="glycosylation" value="3 sites"/>
</dbReference>
<dbReference type="PhosphoSitePlus" id="O35757"/>
<dbReference type="PaxDb" id="10116-ENSRNOP00000015529"/>
<dbReference type="Ensembl" id="ENSRNOT00000015529.5">
    <property type="protein sequence ID" value="ENSRNOP00000015529.2"/>
    <property type="gene ID" value="ENSRNOG00000011416.5"/>
</dbReference>
<dbReference type="GeneID" id="114111"/>
<dbReference type="KEGG" id="rno:114111"/>
<dbReference type="AGR" id="RGD:619800"/>
<dbReference type="CTD" id="7424"/>
<dbReference type="RGD" id="619800">
    <property type="gene designation" value="Vegfc"/>
</dbReference>
<dbReference type="eggNOG" id="ENOG502QVXE">
    <property type="taxonomic scope" value="Eukaryota"/>
</dbReference>
<dbReference type="GeneTree" id="ENSGT00940000156167"/>
<dbReference type="HOGENOM" id="CLU_061712_1_0_1"/>
<dbReference type="InParanoid" id="O35757"/>
<dbReference type="OMA" id="ALPQCQA"/>
<dbReference type="OrthoDB" id="9981160at2759"/>
<dbReference type="PhylomeDB" id="O35757"/>
<dbReference type="TreeFam" id="TF319554"/>
<dbReference type="Reactome" id="R-RNO-114608">
    <property type="pathway name" value="Platelet degranulation"/>
</dbReference>
<dbReference type="Reactome" id="R-RNO-194313">
    <property type="pathway name" value="VEGF ligand-receptor interactions"/>
</dbReference>
<dbReference type="Reactome" id="R-RNO-195399">
    <property type="pathway name" value="VEGF binds to VEGFR leading to receptor dimerization"/>
</dbReference>
<dbReference type="PRO" id="PR:O35757"/>
<dbReference type="Proteomes" id="UP000002494">
    <property type="component" value="Chromosome 16"/>
</dbReference>
<dbReference type="Bgee" id="ENSRNOG00000011416">
    <property type="expression patterns" value="Expressed in liver and 18 other cell types or tissues"/>
</dbReference>
<dbReference type="GO" id="GO:0005615">
    <property type="term" value="C:extracellular space"/>
    <property type="evidence" value="ECO:0000266"/>
    <property type="project" value="RGD"/>
</dbReference>
<dbReference type="GO" id="GO:0016020">
    <property type="term" value="C:membrane"/>
    <property type="evidence" value="ECO:0007669"/>
    <property type="project" value="InterPro"/>
</dbReference>
<dbReference type="GO" id="GO:0042056">
    <property type="term" value="F:chemoattractant activity"/>
    <property type="evidence" value="ECO:0000266"/>
    <property type="project" value="RGD"/>
</dbReference>
<dbReference type="GO" id="GO:0008083">
    <property type="term" value="F:growth factor activity"/>
    <property type="evidence" value="ECO:0000318"/>
    <property type="project" value="GO_Central"/>
</dbReference>
<dbReference type="GO" id="GO:0043185">
    <property type="term" value="F:vascular endothelial growth factor receptor 3 binding"/>
    <property type="evidence" value="ECO:0000315"/>
    <property type="project" value="RGD"/>
</dbReference>
<dbReference type="GO" id="GO:0001525">
    <property type="term" value="P:angiogenesis"/>
    <property type="evidence" value="ECO:0000315"/>
    <property type="project" value="RGD"/>
</dbReference>
<dbReference type="GO" id="GO:0009887">
    <property type="term" value="P:animal organ morphogenesis"/>
    <property type="evidence" value="ECO:0000266"/>
    <property type="project" value="RGD"/>
</dbReference>
<dbReference type="GO" id="GO:0008283">
    <property type="term" value="P:cell population proliferation"/>
    <property type="evidence" value="ECO:0000266"/>
    <property type="project" value="RGD"/>
</dbReference>
<dbReference type="GO" id="GO:1990830">
    <property type="term" value="P:cellular response to leukemia inhibitory factor"/>
    <property type="evidence" value="ECO:0000266"/>
    <property type="project" value="RGD"/>
</dbReference>
<dbReference type="GO" id="GO:0014009">
    <property type="term" value="P:glial cell proliferation"/>
    <property type="evidence" value="ECO:0000266"/>
    <property type="project" value="RGD"/>
</dbReference>
<dbReference type="GO" id="GO:0050930">
    <property type="term" value="P:induction of positive chemotaxis"/>
    <property type="evidence" value="ECO:0000266"/>
    <property type="project" value="RGD"/>
</dbReference>
<dbReference type="GO" id="GO:0016331">
    <property type="term" value="P:morphogenesis of embryonic epithelium"/>
    <property type="evidence" value="ECO:0000266"/>
    <property type="project" value="RGD"/>
</dbReference>
<dbReference type="GO" id="GO:0045776">
    <property type="term" value="P:negative regulation of blood pressure"/>
    <property type="evidence" value="ECO:0000315"/>
    <property type="project" value="RGD"/>
</dbReference>
<dbReference type="GO" id="GO:0045668">
    <property type="term" value="P:negative regulation of osteoblast differentiation"/>
    <property type="evidence" value="ECO:0000266"/>
    <property type="project" value="RGD"/>
</dbReference>
<dbReference type="GO" id="GO:0045766">
    <property type="term" value="P:positive regulation of angiogenesis"/>
    <property type="evidence" value="ECO:0000266"/>
    <property type="project" value="RGD"/>
</dbReference>
<dbReference type="GO" id="GO:0043536">
    <property type="term" value="P:positive regulation of blood vessel endothelial cell migration"/>
    <property type="evidence" value="ECO:0000315"/>
    <property type="project" value="RGD"/>
</dbReference>
<dbReference type="GO" id="GO:0051781">
    <property type="term" value="P:positive regulation of cell division"/>
    <property type="evidence" value="ECO:0007669"/>
    <property type="project" value="UniProtKB-KW"/>
</dbReference>
<dbReference type="GO" id="GO:0030335">
    <property type="term" value="P:positive regulation of cell migration"/>
    <property type="evidence" value="ECO:0000266"/>
    <property type="project" value="RGD"/>
</dbReference>
<dbReference type="GO" id="GO:0008284">
    <property type="term" value="P:positive regulation of cell population proliferation"/>
    <property type="evidence" value="ECO:0000314"/>
    <property type="project" value="MGI"/>
</dbReference>
<dbReference type="GO" id="GO:0050679">
    <property type="term" value="P:positive regulation of epithelial cell proliferation"/>
    <property type="evidence" value="ECO:0000315"/>
    <property type="project" value="RGD"/>
</dbReference>
<dbReference type="GO" id="GO:0060252">
    <property type="term" value="P:positive regulation of glial cell proliferation"/>
    <property type="evidence" value="ECO:0000266"/>
    <property type="project" value="RGD"/>
</dbReference>
<dbReference type="GO" id="GO:1901492">
    <property type="term" value="P:positive regulation of lymphangiogenesis"/>
    <property type="evidence" value="ECO:0000266"/>
    <property type="project" value="RGD"/>
</dbReference>
<dbReference type="GO" id="GO:0060754">
    <property type="term" value="P:positive regulation of mast cell chemotaxis"/>
    <property type="evidence" value="ECO:0000266"/>
    <property type="project" value="RGD"/>
</dbReference>
<dbReference type="GO" id="GO:1902462">
    <property type="term" value="P:positive regulation of mesenchymal stem cell proliferation"/>
    <property type="evidence" value="ECO:0000266"/>
    <property type="project" value="RGD"/>
</dbReference>
<dbReference type="GO" id="GO:0002052">
    <property type="term" value="P:positive regulation of neuroblast proliferation"/>
    <property type="evidence" value="ECO:0000314"/>
    <property type="project" value="MGI"/>
</dbReference>
<dbReference type="GO" id="GO:0050714">
    <property type="term" value="P:positive regulation of protein secretion"/>
    <property type="evidence" value="ECO:0000315"/>
    <property type="project" value="RGD"/>
</dbReference>
<dbReference type="GO" id="GO:0045765">
    <property type="term" value="P:regulation of angiogenesis"/>
    <property type="evidence" value="ECO:0000304"/>
    <property type="project" value="RGD"/>
</dbReference>
<dbReference type="GO" id="GO:0030947">
    <property type="term" value="P:regulation of vascular endothelial growth factor receptor signaling pathway"/>
    <property type="evidence" value="ECO:0000315"/>
    <property type="project" value="RGD"/>
</dbReference>
<dbReference type="GO" id="GO:0001666">
    <property type="term" value="P:response to hypoxia"/>
    <property type="evidence" value="ECO:0000318"/>
    <property type="project" value="GO_Central"/>
</dbReference>
<dbReference type="GO" id="GO:0009410">
    <property type="term" value="P:response to xenobiotic stimulus"/>
    <property type="evidence" value="ECO:0000270"/>
    <property type="project" value="RGD"/>
</dbReference>
<dbReference type="GO" id="GO:0002040">
    <property type="term" value="P:sprouting angiogenesis"/>
    <property type="evidence" value="ECO:0000318"/>
    <property type="project" value="GO_Central"/>
</dbReference>
<dbReference type="GO" id="GO:0048010">
    <property type="term" value="P:vascular endothelial growth factor receptor signaling pathway"/>
    <property type="evidence" value="ECO:0000250"/>
    <property type="project" value="UniProtKB"/>
</dbReference>
<dbReference type="GO" id="GO:0038084">
    <property type="term" value="P:vascular endothelial growth factor signaling pathway"/>
    <property type="evidence" value="ECO:0000318"/>
    <property type="project" value="GO_Central"/>
</dbReference>
<dbReference type="CDD" id="cd00135">
    <property type="entry name" value="PDGF"/>
    <property type="match status" value="1"/>
</dbReference>
<dbReference type="FunFam" id="2.10.90.10:FF:000025">
    <property type="entry name" value="vascular endothelial growth factor C"/>
    <property type="match status" value="1"/>
</dbReference>
<dbReference type="Gene3D" id="2.10.90.10">
    <property type="entry name" value="Cystine-knot cytokines"/>
    <property type="match status" value="1"/>
</dbReference>
<dbReference type="InterPro" id="IPR004153">
    <property type="entry name" value="CXCXC_repeat"/>
</dbReference>
<dbReference type="InterPro" id="IPR029034">
    <property type="entry name" value="Cystine-knot_cytokine"/>
</dbReference>
<dbReference type="InterPro" id="IPR023581">
    <property type="entry name" value="PD_growth_factor_CS"/>
</dbReference>
<dbReference type="InterPro" id="IPR000072">
    <property type="entry name" value="PDGF/VEGF_dom"/>
</dbReference>
<dbReference type="InterPro" id="IPR050507">
    <property type="entry name" value="PDGF/VEGF_growth_factor"/>
</dbReference>
<dbReference type="PANTHER" id="PTHR12025">
    <property type="entry name" value="VASCULAR ENDOTHELIAL GROWTH FACTOR"/>
    <property type="match status" value="1"/>
</dbReference>
<dbReference type="PANTHER" id="PTHR12025:SF3">
    <property type="entry name" value="VASCULAR ENDOTHELIAL GROWTH FACTOR C"/>
    <property type="match status" value="1"/>
</dbReference>
<dbReference type="Pfam" id="PF03128">
    <property type="entry name" value="CXCXC"/>
    <property type="match status" value="3"/>
</dbReference>
<dbReference type="Pfam" id="PF00341">
    <property type="entry name" value="PDGF"/>
    <property type="match status" value="1"/>
</dbReference>
<dbReference type="SMART" id="SM00141">
    <property type="entry name" value="PDGF"/>
    <property type="match status" value="1"/>
</dbReference>
<dbReference type="SUPFAM" id="SSF57501">
    <property type="entry name" value="Cystine-knot cytokines"/>
    <property type="match status" value="1"/>
</dbReference>
<dbReference type="PROSITE" id="PS00249">
    <property type="entry name" value="PDGF_1"/>
    <property type="match status" value="1"/>
</dbReference>
<dbReference type="PROSITE" id="PS50278">
    <property type="entry name" value="PDGF_2"/>
    <property type="match status" value="1"/>
</dbReference>
<protein>
    <recommendedName>
        <fullName>Vascular endothelial growth factor C</fullName>
        <shortName>VEGF-C</shortName>
    </recommendedName>
    <alternativeName>
        <fullName>Flt4 ligand</fullName>
        <shortName>Flt4-L</shortName>
    </alternativeName>
    <alternativeName>
        <fullName>Vascular endothelial growth factor-related protein</fullName>
        <shortName>VRP</shortName>
    </alternativeName>
</protein>
<comment type="function">
    <text evidence="2">Growth factor active in angiogenesis, and endothelial cell growth, stimulating their proliferation and migration and also has effects on the permeability of blood vessels. May function in angiogenesis of the venous and lymphatic vascular systems during embryogenesis, and also in the maintenance of differentiated lymphatic endothelium in adults. Binds and activates KDR/VEGFR2 and FLT4/VEGFR3 receptors.</text>
</comment>
<comment type="subunit">
    <text evidence="2">Homodimer; non-covalent and antiparallel. Interacts with FLT4/VEGFR3; the interaction is required for FLT4/VEGFR3 homodimarization and activation.</text>
</comment>
<comment type="subcellular location">
    <subcellularLocation>
        <location>Secreted</location>
    </subcellularLocation>
</comment>
<comment type="tissue specificity">
    <text evidence="4 5">Highly expressed in the lung, ovary, preputial gland and the adrenal gland. Expressed in the post-pubertal mammary glands.</text>
</comment>
<comment type="developmental stage">
    <text evidence="4">Increases moderately during pregnancy (2.8-fold increase on day 4) and lactation (1.9-fold increase on day 2).</text>
</comment>
<comment type="PTM">
    <text evidence="1">Undergoes a complex proteolytic maturation which generates a variety of processed secreted forms with increased activity toward VEGFR-3, but only the fully processed form could activate VEGFR-2. VEGF-C first form an antiparallel homodimer linked by disulfide bonds. Before secretion, a cleavage occurs between Arg-223 and Ser-224 producing a heterotetramer. The next extracellular step of the processing removes the N-terminal propeptide. Finally the mature VEGF-C is composed mostly of two VEGF homology domains (VHDs) bound by non-covalent interactions (By similarity).</text>
</comment>
<comment type="miscellaneous">
    <text>Indolinones; MAE87, MAE106 and MAZ51 inhibit VEGF-C induced activation of VEGFR-3.</text>
</comment>
<comment type="similarity">
    <text evidence="6">Belongs to the PDGF/VEGF growth factor family.</text>
</comment>
<reference key="1">
    <citation type="journal article" date="2001" name="Eur. J. Biochem.">
        <title>Characterization of indolinones which preferentially inhibit VEGF-C- and VEGF-D-induced activation of VEGFR-3 rather than VEGFR-2.</title>
        <authorList>
            <person name="Kirkin V."/>
            <person name="Mazitschek R."/>
            <person name="Krishnan J."/>
            <person name="Steffen A."/>
            <person name="Waltenberger J."/>
            <person name="Pepper M.S."/>
            <person name="Giannis A."/>
            <person name="Sleeman J.P."/>
        </authorList>
    </citation>
    <scope>NUCLEOTIDE SEQUENCE [MRNA]</scope>
    <scope>TISSUE SPECIFICITY</scope>
    <scope>MUTAGENESIS OF CYS-152</scope>
    <source>
        <strain>Sprague-Dawley</strain>
    </source>
</reference>
<reference key="2">
    <citation type="journal article" date="2000" name="Dev. Dyn.">
        <title>Regulation of VEGF and VEGF receptor expression in the rodent mammary gland during pregnancy, lactation, and involution.</title>
        <authorList>
            <person name="Pepper M.S."/>
            <person name="Baetens D."/>
            <person name="Mandriota S.J."/>
            <person name="Di Sanza C."/>
            <person name="Oikemus S."/>
            <person name="Lane T.F."/>
            <person name="Soriano J.V."/>
            <person name="Montesano R."/>
            <person name="Iruela-Arispe M.L."/>
        </authorList>
    </citation>
    <scope>NUCLEOTIDE SEQUENCE [MRNA] OF 153-278</scope>
    <scope>TISSUE SPECIFICITY</scope>
    <scope>DEVELOPMENTAL STAGE</scope>
    <source>
        <strain>Sprague-Dawley</strain>
        <tissue>Lung</tissue>
    </source>
</reference>
<accession>O35757</accession>
<accession>Q91ZE3</accession>
<gene>
    <name type="primary">Vegfc</name>
</gene>
<keyword id="KW-0037">Angiogenesis</keyword>
<keyword id="KW-0165">Cleavage on pair of basic residues</keyword>
<keyword id="KW-0217">Developmental protein</keyword>
<keyword id="KW-0221">Differentiation</keyword>
<keyword id="KW-1015">Disulfide bond</keyword>
<keyword id="KW-0325">Glycoprotein</keyword>
<keyword id="KW-0339">Growth factor</keyword>
<keyword id="KW-0497">Mitogen</keyword>
<keyword id="KW-1185">Reference proteome</keyword>
<keyword id="KW-0677">Repeat</keyword>
<keyword id="KW-0964">Secreted</keyword>
<keyword id="KW-0732">Signal</keyword>
<organism>
    <name type="scientific">Rattus norvegicus</name>
    <name type="common">Rat</name>
    <dbReference type="NCBI Taxonomy" id="10116"/>
    <lineage>
        <taxon>Eukaryota</taxon>
        <taxon>Metazoa</taxon>
        <taxon>Chordata</taxon>
        <taxon>Craniata</taxon>
        <taxon>Vertebrata</taxon>
        <taxon>Euteleostomi</taxon>
        <taxon>Mammalia</taxon>
        <taxon>Eutheria</taxon>
        <taxon>Euarchontoglires</taxon>
        <taxon>Glires</taxon>
        <taxon>Rodentia</taxon>
        <taxon>Myomorpha</taxon>
        <taxon>Muroidea</taxon>
        <taxon>Muridae</taxon>
        <taxon>Murinae</taxon>
        <taxon>Rattus</taxon>
    </lineage>
</organism>
<name>VEGFC_RAT</name>
<sequence length="415" mass="46397">MHLLCFLSLACSLLAAALIPGPREAPATVAAFESGLGFSEAEPDGGEVKGFEGKDLEEQLRSVSSVDELMSVLYPDYWKMYKCQLRKGGWQQPSLNMRTGDTVKLAAAHYNTEILKSIDNEWRKTQCMPREVCIDVGKEFGAATNTFFKPPCVSVYRCGGCCNSEGLQCMNTSTGYLSKTLFEITVPLSQGPKPVTISFANHTSCRCMSKLDVYRQVHSIIRRSLPATLPQCQAANKTCPANYVWNNYMCQCLAQQDFIFYSNVEDDSSNGFHDVCGPNKELDEDTCQCVCKGGLRPSSCGPHKELDRDSCQCVCKNKLFLNSCGANREFDENTCQCVCKRTCPRNQPLNPGKCACECTENTQKCFLKGKKFHHQTCSCYRRPCTNRLKHCDPGLSFSEEVCRCVPSYWKRPHLN</sequence>
<feature type="signal peptide" evidence="1">
    <location>
        <begin position="1"/>
        <end position="31"/>
    </location>
</feature>
<feature type="propeptide" id="PRO_0000045175" evidence="3">
    <location>
        <begin position="32"/>
        <end position="107"/>
    </location>
</feature>
<feature type="chain" id="PRO_0000023406" description="Vascular endothelial growth factor C">
    <location>
        <begin position="108"/>
        <end position="223"/>
    </location>
</feature>
<feature type="propeptide" id="PRO_0000023407" evidence="3">
    <location>
        <begin position="224"/>
        <end position="415"/>
    </location>
</feature>
<feature type="repeat" description="1">
    <location>
        <begin position="276"/>
        <end position="291"/>
    </location>
</feature>
<feature type="repeat" description="2">
    <location>
        <begin position="300"/>
        <end position="315"/>
    </location>
</feature>
<feature type="repeat" description="3">
    <location>
        <begin position="324"/>
        <end position="339"/>
    </location>
</feature>
<feature type="repeat" description="4">
    <location>
        <begin position="343"/>
        <end position="358"/>
    </location>
</feature>
<feature type="region of interest" description="4 X 16 AA repeats of C-X(10)-C-X-C-X(1,3)-C">
    <location>
        <begin position="276"/>
        <end position="358"/>
    </location>
</feature>
<feature type="glycosylation site" description="N-linked (GlcNAc...) asparagine" evidence="3">
    <location>
        <position position="171"/>
    </location>
</feature>
<feature type="glycosylation site" description="N-linked (GlcNAc...) asparagine" evidence="3">
    <location>
        <position position="201"/>
    </location>
</feature>
<feature type="glycosylation site" description="N-linked (GlcNAc...) asparagine" evidence="3">
    <location>
        <position position="236"/>
    </location>
</feature>
<feature type="disulfide bond" evidence="2">
    <location>
        <begin position="127"/>
        <end position="169"/>
    </location>
</feature>
<feature type="disulfide bond" description="Interchain" evidence="2">
    <location>
        <position position="152"/>
    </location>
</feature>
<feature type="disulfide bond" evidence="2">
    <location>
        <begin position="158"/>
        <end position="205"/>
    </location>
</feature>
<feature type="disulfide bond" description="Interchain" evidence="2">
    <location>
        <position position="161"/>
    </location>
</feature>
<feature type="disulfide bond" evidence="2">
    <location>
        <begin position="162"/>
        <end position="207"/>
    </location>
</feature>
<feature type="mutagenesis site" description="Inhibits ability to activate VEGFR-2." evidence="5">
    <original>C</original>
    <variation>S</variation>
    <location>
        <position position="152"/>
    </location>
</feature>
<evidence type="ECO:0000250" key="1"/>
<evidence type="ECO:0000250" key="2">
    <source>
        <dbReference type="UniProtKB" id="P49767"/>
    </source>
</evidence>
<evidence type="ECO:0000255" key="3"/>
<evidence type="ECO:0000269" key="4">
    <source>
    </source>
</evidence>
<evidence type="ECO:0000269" key="5">
    <source>
    </source>
</evidence>
<evidence type="ECO:0000305" key="6"/>
<proteinExistence type="evidence at protein level"/>